<reference key="1">
    <citation type="submission" date="2014-07" db="EMBL/GenBank/DDBJ databases">
        <title>Complete genome Sequence of Geobacillus stearothermophilus strain 10, a Yellowstone hot spring isolate.</title>
        <authorList>
            <person name="Lewis S.A."/>
            <person name="Clifton S.W."/>
            <person name="Najar F.Z."/>
            <person name="Roe B.A."/>
        </authorList>
    </citation>
    <scope>NUCLEOTIDE SEQUENCE [LARGE SCALE GENOMIC DNA]</scope>
    <source>
        <strain>DSM 13240 / CIP 106956 / 10</strain>
    </source>
</reference>
<reference evidence="7" key="2">
    <citation type="journal article" date="2017" name="J. Am. Chem. Soc.">
        <title>Structure-based mechanism for oxidative decarboxylation reactions mediated by amino acids and heme propionates in coproheme decarboxylase (HemQ).</title>
        <authorList>
            <person name="Celis A.I."/>
            <person name="Gauss G.H."/>
            <person name="Streit B.R."/>
            <person name="Shisler K."/>
            <person name="Moraski G.C."/>
            <person name="Rodgers K.R."/>
            <person name="Lukat-Rodgers G.S."/>
            <person name="Peters J.W."/>
            <person name="DuBois J.L."/>
        </authorList>
    </citation>
    <scope>X-RAY CRYSTALLOGRAPHY (1.80 ANGSTROMS) IN COMPLEX WITH MANGANESE-COPROPORPHYRIN III</scope>
    <scope>FUNCTION</scope>
    <scope>CATALYTIC ACTIVITY</scope>
    <scope>COFACTOR</scope>
    <scope>SUBUNIT</scope>
</reference>
<proteinExistence type="evidence at protein level"/>
<feature type="chain" id="PRO_0000450276" description="Coproheme decarboxylase">
    <location>
        <begin position="1"/>
        <end position="248"/>
    </location>
</feature>
<feature type="active site" evidence="1">
    <location>
        <position position="144"/>
    </location>
</feature>
<feature type="binding site" evidence="1 5">
    <location>
        <position position="130"/>
    </location>
    <ligand>
        <name>Fe-coproporphyrin III</name>
        <dbReference type="ChEBI" id="CHEBI:68438"/>
    </ligand>
</feature>
<feature type="binding site" evidence="1">
    <location>
        <begin position="144"/>
        <end position="148"/>
    </location>
    <ligand>
        <name>Fe-coproporphyrin III</name>
        <dbReference type="ChEBI" id="CHEBI:68438"/>
    </ligand>
</feature>
<feature type="binding site" evidence="5">
    <location>
        <position position="144"/>
    </location>
    <ligand>
        <name>Fe-coproporphyrin III</name>
        <dbReference type="ChEBI" id="CHEBI:68438"/>
    </ligand>
</feature>
<feature type="binding site" evidence="5">
    <location>
        <position position="148"/>
    </location>
    <ligand>
        <name>Fe-coproporphyrin III</name>
        <dbReference type="ChEBI" id="CHEBI:68438"/>
    </ligand>
</feature>
<feature type="binding site" description="axial binding residue" evidence="1 2">
    <location>
        <position position="171"/>
    </location>
    <ligand>
        <name>Fe-coproporphyrin III</name>
        <dbReference type="ChEBI" id="CHEBI:68438"/>
    </ligand>
    <ligandPart>
        <name>Fe</name>
        <dbReference type="ChEBI" id="CHEBI:18248"/>
    </ligandPart>
</feature>
<feature type="binding site" evidence="1 5">
    <location>
        <position position="184"/>
    </location>
    <ligand>
        <name>Fe-coproporphyrin III</name>
        <dbReference type="ChEBI" id="CHEBI:68438"/>
    </ligand>
</feature>
<feature type="binding site" evidence="1 5">
    <location>
        <position position="222"/>
    </location>
    <ligand>
        <name>Fe-coproporphyrin III</name>
        <dbReference type="ChEBI" id="CHEBI:68438"/>
    </ligand>
</feature>
<feature type="strand" evidence="8">
    <location>
        <begin position="7"/>
        <end position="20"/>
    </location>
</feature>
<feature type="helix" evidence="8">
    <location>
        <begin position="22"/>
        <end position="27"/>
    </location>
</feature>
<feature type="helix" evidence="8">
    <location>
        <begin position="30"/>
        <end position="52"/>
    </location>
</feature>
<feature type="strand" evidence="8">
    <location>
        <begin position="57"/>
        <end position="67"/>
    </location>
</feature>
<feature type="strand" evidence="8">
    <location>
        <begin position="69"/>
        <end position="78"/>
    </location>
</feature>
<feature type="helix" evidence="8">
    <location>
        <begin position="79"/>
        <end position="90"/>
    </location>
</feature>
<feature type="helix" evidence="8">
    <location>
        <begin position="94"/>
        <end position="97"/>
    </location>
</feature>
<feature type="strand" evidence="8">
    <location>
        <begin position="98"/>
        <end position="112"/>
    </location>
</feature>
<feature type="helix" evidence="8">
    <location>
        <begin position="121"/>
        <end position="123"/>
    </location>
</feature>
<feature type="helix" evidence="8">
    <location>
        <begin position="125"/>
        <end position="131"/>
    </location>
</feature>
<feature type="strand" evidence="8">
    <location>
        <begin position="139"/>
        <end position="148"/>
    </location>
</feature>
<feature type="helix" evidence="8">
    <location>
        <begin position="156"/>
        <end position="158"/>
    </location>
</feature>
<feature type="helix" evidence="8">
    <location>
        <begin position="161"/>
        <end position="176"/>
    </location>
</feature>
<feature type="turn" evidence="8">
    <location>
        <begin position="177"/>
        <end position="181"/>
    </location>
</feature>
<feature type="strand" evidence="8">
    <location>
        <begin position="183"/>
        <end position="188"/>
    </location>
</feature>
<feature type="turn" evidence="8">
    <location>
        <begin position="190"/>
        <end position="192"/>
    </location>
</feature>
<feature type="strand" evidence="8">
    <location>
        <begin position="193"/>
        <end position="204"/>
    </location>
</feature>
<feature type="helix" evidence="8">
    <location>
        <begin position="207"/>
        <end position="217"/>
    </location>
</feature>
<feature type="helix" evidence="8">
    <location>
        <begin position="220"/>
        <end position="225"/>
    </location>
</feature>
<feature type="strand" evidence="8">
    <location>
        <begin position="226"/>
        <end position="228"/>
    </location>
</feature>
<feature type="strand" evidence="8">
    <location>
        <begin position="232"/>
        <end position="236"/>
    </location>
</feature>
<feature type="helix" evidence="8">
    <location>
        <begin position="239"/>
        <end position="241"/>
    </location>
</feature>
<feature type="helix" evidence="8">
    <location>
        <begin position="242"/>
        <end position="246"/>
    </location>
</feature>
<accession>A0A0K2H9D8</accession>
<name>CHDC_GEOS3</name>
<protein>
    <recommendedName>
        <fullName evidence="1 3">Coproheme decarboxylase</fullName>
        <ecNumber evidence="1 2">1.3.98.5</ecNumber>
    </recommendedName>
    <alternativeName>
        <fullName evidence="1 4">Coproheme III oxidative decarboxylase</fullName>
    </alternativeName>
    <alternativeName>
        <fullName evidence="1 4">Hydrogen peroxide-dependent heme synthase</fullName>
    </alternativeName>
</protein>
<gene>
    <name evidence="1" type="primary">chdC</name>
    <name evidence="6" type="ORF">GT50_08830</name>
</gene>
<dbReference type="EC" id="1.3.98.5" evidence="1 2"/>
<dbReference type="EMBL" id="CP008934">
    <property type="protein sequence ID" value="ALA70306.1"/>
    <property type="molecule type" value="Genomic_DNA"/>
</dbReference>
<dbReference type="PDB" id="5T2K">
    <property type="method" value="X-ray"/>
    <property type="resolution" value="1.80 A"/>
    <property type="chains" value="A/B/C/D/E=1-248"/>
</dbReference>
<dbReference type="PDBsum" id="5T2K"/>
<dbReference type="SMR" id="A0A0K2H9D8"/>
<dbReference type="KEGG" id="gse:GT50_08830"/>
<dbReference type="PATRIC" id="fig|272567.8.peg.1802"/>
<dbReference type="OrthoDB" id="9773646at2"/>
<dbReference type="BRENDA" id="1.3.98.5">
    <property type="organism ID" value="623"/>
</dbReference>
<dbReference type="UniPathway" id="UPA00252"/>
<dbReference type="GO" id="GO:0020037">
    <property type="term" value="F:heme binding"/>
    <property type="evidence" value="ECO:0007669"/>
    <property type="project" value="InterPro"/>
</dbReference>
<dbReference type="GO" id="GO:0046872">
    <property type="term" value="F:metal ion binding"/>
    <property type="evidence" value="ECO:0007669"/>
    <property type="project" value="UniProtKB-KW"/>
</dbReference>
<dbReference type="GO" id="GO:0016634">
    <property type="term" value="F:oxidoreductase activity, acting on the CH-CH group of donors, oxygen as acceptor"/>
    <property type="evidence" value="ECO:0007669"/>
    <property type="project" value="UniProtKB-UniRule"/>
</dbReference>
<dbReference type="GO" id="GO:0004601">
    <property type="term" value="F:peroxidase activity"/>
    <property type="evidence" value="ECO:0007669"/>
    <property type="project" value="InterPro"/>
</dbReference>
<dbReference type="GO" id="GO:0006785">
    <property type="term" value="P:heme B biosynthetic process"/>
    <property type="evidence" value="ECO:0007669"/>
    <property type="project" value="UniProtKB-UniRule"/>
</dbReference>
<dbReference type="Gene3D" id="3.30.70.1030">
    <property type="entry name" value="Apc35880, domain 1"/>
    <property type="match status" value="2"/>
</dbReference>
<dbReference type="HAMAP" id="MF_01442">
    <property type="entry name" value="Coproheme_decarbox_1"/>
    <property type="match status" value="1"/>
</dbReference>
<dbReference type="InterPro" id="IPR031332">
    <property type="entry name" value="CHDC"/>
</dbReference>
<dbReference type="InterPro" id="IPR010644">
    <property type="entry name" value="ChdC/CLD"/>
</dbReference>
<dbReference type="InterPro" id="IPR011008">
    <property type="entry name" value="Dimeric_a/b-barrel"/>
</dbReference>
<dbReference type="NCBIfam" id="NF008913">
    <property type="entry name" value="PRK12276.1"/>
    <property type="match status" value="1"/>
</dbReference>
<dbReference type="PANTHER" id="PTHR36843:SF1">
    <property type="entry name" value="COPROHEME DECARBOXYLASE"/>
    <property type="match status" value="1"/>
</dbReference>
<dbReference type="PANTHER" id="PTHR36843">
    <property type="entry name" value="HEME-DEPENDENT PEROXIDASE YWFI-RELATED"/>
    <property type="match status" value="1"/>
</dbReference>
<dbReference type="Pfam" id="PF06778">
    <property type="entry name" value="Chlor_dismutase"/>
    <property type="match status" value="1"/>
</dbReference>
<dbReference type="SUPFAM" id="SSF54909">
    <property type="entry name" value="Dimeric alpha+beta barrel"/>
    <property type="match status" value="1"/>
</dbReference>
<evidence type="ECO:0000255" key="1">
    <source>
        <dbReference type="HAMAP-Rule" id="MF_01442"/>
    </source>
</evidence>
<evidence type="ECO:0000269" key="2">
    <source>
    </source>
</evidence>
<evidence type="ECO:0000303" key="3">
    <source>
    </source>
</evidence>
<evidence type="ECO:0000305" key="4"/>
<evidence type="ECO:0000305" key="5">
    <source>
    </source>
</evidence>
<evidence type="ECO:0000312" key="6">
    <source>
        <dbReference type="EMBL" id="ALA70306.1"/>
    </source>
</evidence>
<evidence type="ECO:0007744" key="7">
    <source>
        <dbReference type="PDB" id="5T2K"/>
    </source>
</evidence>
<evidence type="ECO:0007829" key="8">
    <source>
        <dbReference type="PDB" id="5T2K"/>
    </source>
</evidence>
<organism>
    <name type="scientific">Geobacillus stearothermophilus (strain DSM 13240 / CIP 106956 / 10)</name>
    <dbReference type="NCBI Taxonomy" id="272567"/>
    <lineage>
        <taxon>Bacteria</taxon>
        <taxon>Bacillati</taxon>
        <taxon>Bacillota</taxon>
        <taxon>Bacilli</taxon>
        <taxon>Bacillales</taxon>
        <taxon>Anoxybacillaceae</taxon>
        <taxon>Geobacillus</taxon>
    </lineage>
</organism>
<keyword id="KW-0002">3D-structure</keyword>
<keyword id="KW-0349">Heme</keyword>
<keyword id="KW-0350">Heme biosynthesis</keyword>
<keyword id="KW-0408">Iron</keyword>
<keyword id="KW-0479">Metal-binding</keyword>
<keyword id="KW-0560">Oxidoreductase</keyword>
<comment type="function">
    <text evidence="2">Involved in coproporphyrin-dependent heme b biosynthesis (PubMed:27936663). Catalyzes the decarboxylation of Fe-coproporphyrin III (coproheme) to heme b (protoheme IX), the last step of the pathway (PubMed:27936663). The reaction occurs in a stepwise manner with a three-propionate harderoheme intermediate (PubMed:27936663).</text>
</comment>
<comment type="catalytic activity">
    <reaction evidence="1 2">
        <text>Fe-coproporphyrin III + 2 H2O2 + 2 H(+) = heme b + 2 CO2 + 4 H2O</text>
        <dbReference type="Rhea" id="RHEA:56516"/>
        <dbReference type="ChEBI" id="CHEBI:15377"/>
        <dbReference type="ChEBI" id="CHEBI:15378"/>
        <dbReference type="ChEBI" id="CHEBI:16240"/>
        <dbReference type="ChEBI" id="CHEBI:16526"/>
        <dbReference type="ChEBI" id="CHEBI:60344"/>
        <dbReference type="ChEBI" id="CHEBI:68438"/>
        <dbReference type="EC" id="1.3.98.5"/>
    </reaction>
    <physiologicalReaction direction="left-to-right" evidence="1 2">
        <dbReference type="Rhea" id="RHEA:56517"/>
    </physiologicalReaction>
</comment>
<comment type="catalytic activity">
    <reaction evidence="1 2">
        <text>Fe-coproporphyrin III + H2O2 + H(+) = harderoheme III + CO2 + 2 H2O</text>
        <dbReference type="Rhea" id="RHEA:57940"/>
        <dbReference type="ChEBI" id="CHEBI:15377"/>
        <dbReference type="ChEBI" id="CHEBI:15378"/>
        <dbReference type="ChEBI" id="CHEBI:16240"/>
        <dbReference type="ChEBI" id="CHEBI:16526"/>
        <dbReference type="ChEBI" id="CHEBI:68438"/>
        <dbReference type="ChEBI" id="CHEBI:142463"/>
    </reaction>
    <physiologicalReaction direction="left-to-right" evidence="1 2">
        <dbReference type="Rhea" id="RHEA:57941"/>
    </physiologicalReaction>
</comment>
<comment type="catalytic activity">
    <reaction evidence="1 2">
        <text>harderoheme III + H2O2 + H(+) = heme b + CO2 + 2 H2O</text>
        <dbReference type="Rhea" id="RHEA:57944"/>
        <dbReference type="ChEBI" id="CHEBI:15377"/>
        <dbReference type="ChEBI" id="CHEBI:15378"/>
        <dbReference type="ChEBI" id="CHEBI:16240"/>
        <dbReference type="ChEBI" id="CHEBI:16526"/>
        <dbReference type="ChEBI" id="CHEBI:60344"/>
        <dbReference type="ChEBI" id="CHEBI:142463"/>
    </reaction>
    <physiologicalReaction direction="left-to-right" evidence="1 2">
        <dbReference type="Rhea" id="RHEA:57945"/>
    </physiologicalReaction>
</comment>
<comment type="cofactor">
    <cofactor evidence="1 5">
        <name>Fe-coproporphyrin III</name>
        <dbReference type="ChEBI" id="CHEBI:68438"/>
    </cofactor>
    <text evidence="1 5">Fe-coproporphyrin III acts both as a substrate and a redox cofactor.</text>
</comment>
<comment type="pathway">
    <text evidence="1">Porphyrin-containing compound metabolism; protoheme biosynthesis.</text>
</comment>
<comment type="subunit">
    <text evidence="2">Homopentamer.</text>
</comment>
<comment type="similarity">
    <text evidence="1 4">Belongs to the ChdC family. Type 1 subfamily.</text>
</comment>
<sequence>MSEAAQTLDGWYCLHDFRTIDWSAWKTLPNEEREAAISEFLALVDQWETTESEKQGSHAVYTIVGQKADILFMILRPTLDELHEIETALNKTKLADYLLPAYSYVSVVELSNYLASGSEDPYQIPEVRRRLYPILPKTNYICFYPMDKRRQGNDNWYMLSMEQRRELMRAHGMTGRKYAGKVTQIITGSVGLDDFEWGVTLFSDDALQFKKLVYEMRFDEVSARFGEFGSFFVGTRLPMENVSSFFHV</sequence>